<protein>
    <recommendedName>
        <fullName evidence="1">Fluoride-specific ion channel FluC</fullName>
    </recommendedName>
</protein>
<keyword id="KW-0997">Cell inner membrane</keyword>
<keyword id="KW-1003">Cell membrane</keyword>
<keyword id="KW-0407">Ion channel</keyword>
<keyword id="KW-0406">Ion transport</keyword>
<keyword id="KW-0472">Membrane</keyword>
<keyword id="KW-0479">Metal-binding</keyword>
<keyword id="KW-1185">Reference proteome</keyword>
<keyword id="KW-0915">Sodium</keyword>
<keyword id="KW-0812">Transmembrane</keyword>
<keyword id="KW-1133">Transmembrane helix</keyword>
<keyword id="KW-0813">Transport</keyword>
<sequence>MFATFGFIALFAVLGAWARYGQTLLVQAAFGRGFPWATLSINVLGCFLMGFLFFETLERISVSPELRTGMLTGGLGAYTTFSTFSLETLVLFENGEAVKGLLYMFTSLFLCVGAAFAGAWISHST</sequence>
<organism>
    <name type="scientific">Acidithiobacillus ferrooxidans (strain ATCC 23270 / DSM 14882 / CIP 104768 / NCIMB 8455)</name>
    <name type="common">Ferrobacillus ferrooxidans (strain ATCC 23270)</name>
    <dbReference type="NCBI Taxonomy" id="243159"/>
    <lineage>
        <taxon>Bacteria</taxon>
        <taxon>Pseudomonadati</taxon>
        <taxon>Pseudomonadota</taxon>
        <taxon>Acidithiobacillia</taxon>
        <taxon>Acidithiobacillales</taxon>
        <taxon>Acidithiobacillaceae</taxon>
        <taxon>Acidithiobacillus</taxon>
    </lineage>
</organism>
<evidence type="ECO:0000255" key="1">
    <source>
        <dbReference type="HAMAP-Rule" id="MF_00454"/>
    </source>
</evidence>
<dbReference type="EMBL" id="CP001219">
    <property type="protein sequence ID" value="ACK80822.1"/>
    <property type="molecule type" value="Genomic_DNA"/>
</dbReference>
<dbReference type="RefSeq" id="WP_009569543.1">
    <property type="nucleotide sequence ID" value="NC_011761.1"/>
</dbReference>
<dbReference type="SMR" id="B7J9Q0"/>
<dbReference type="STRING" id="243159.AFE_2926"/>
<dbReference type="PaxDb" id="243159-AFE_2926"/>
<dbReference type="GeneID" id="65281940"/>
<dbReference type="KEGG" id="afr:AFE_2926"/>
<dbReference type="eggNOG" id="COG0239">
    <property type="taxonomic scope" value="Bacteria"/>
</dbReference>
<dbReference type="HOGENOM" id="CLU_114342_3_0_6"/>
<dbReference type="Proteomes" id="UP000001362">
    <property type="component" value="Chromosome"/>
</dbReference>
<dbReference type="GO" id="GO:0005886">
    <property type="term" value="C:plasma membrane"/>
    <property type="evidence" value="ECO:0007669"/>
    <property type="project" value="UniProtKB-SubCell"/>
</dbReference>
<dbReference type="GO" id="GO:0062054">
    <property type="term" value="F:fluoride channel activity"/>
    <property type="evidence" value="ECO:0007669"/>
    <property type="project" value="UniProtKB-UniRule"/>
</dbReference>
<dbReference type="GO" id="GO:0046872">
    <property type="term" value="F:metal ion binding"/>
    <property type="evidence" value="ECO:0007669"/>
    <property type="project" value="UniProtKB-KW"/>
</dbReference>
<dbReference type="GO" id="GO:0140114">
    <property type="term" value="P:cellular detoxification of fluoride"/>
    <property type="evidence" value="ECO:0007669"/>
    <property type="project" value="UniProtKB-UniRule"/>
</dbReference>
<dbReference type="HAMAP" id="MF_00454">
    <property type="entry name" value="FluC"/>
    <property type="match status" value="1"/>
</dbReference>
<dbReference type="InterPro" id="IPR003691">
    <property type="entry name" value="FluC"/>
</dbReference>
<dbReference type="NCBIfam" id="TIGR00494">
    <property type="entry name" value="crcB"/>
    <property type="match status" value="1"/>
</dbReference>
<dbReference type="PANTHER" id="PTHR28259">
    <property type="entry name" value="FLUORIDE EXPORT PROTEIN 1-RELATED"/>
    <property type="match status" value="1"/>
</dbReference>
<dbReference type="PANTHER" id="PTHR28259:SF1">
    <property type="entry name" value="FLUORIDE EXPORT PROTEIN 1-RELATED"/>
    <property type="match status" value="1"/>
</dbReference>
<dbReference type="Pfam" id="PF02537">
    <property type="entry name" value="CRCB"/>
    <property type="match status" value="1"/>
</dbReference>
<accession>B7J9Q0</accession>
<name>FLUC_ACIF2</name>
<reference key="1">
    <citation type="journal article" date="2008" name="BMC Genomics">
        <title>Acidithiobacillus ferrooxidans metabolism: from genome sequence to industrial applications.</title>
        <authorList>
            <person name="Valdes J."/>
            <person name="Pedroso I."/>
            <person name="Quatrini R."/>
            <person name="Dodson R.J."/>
            <person name="Tettelin H."/>
            <person name="Blake R. II"/>
            <person name="Eisen J.A."/>
            <person name="Holmes D.S."/>
        </authorList>
    </citation>
    <scope>NUCLEOTIDE SEQUENCE [LARGE SCALE GENOMIC DNA]</scope>
    <source>
        <strain>ATCC 23270 / DSM 14882 / CIP 104768 / NCIMB 8455</strain>
    </source>
</reference>
<gene>
    <name evidence="1" type="primary">fluC</name>
    <name evidence="1" type="synonym">crcB</name>
    <name type="ordered locus">AFE_2926</name>
</gene>
<proteinExistence type="inferred from homology"/>
<feature type="chain" id="PRO_1000189698" description="Fluoride-specific ion channel FluC">
    <location>
        <begin position="1"/>
        <end position="125"/>
    </location>
</feature>
<feature type="transmembrane region" description="Helical" evidence="1">
    <location>
        <begin position="1"/>
        <end position="21"/>
    </location>
</feature>
<feature type="transmembrane region" description="Helical" evidence="1">
    <location>
        <begin position="34"/>
        <end position="54"/>
    </location>
</feature>
<feature type="transmembrane region" description="Helical" evidence="1">
    <location>
        <begin position="72"/>
        <end position="92"/>
    </location>
</feature>
<feature type="transmembrane region" description="Helical" evidence="1">
    <location>
        <begin position="101"/>
        <end position="121"/>
    </location>
</feature>
<feature type="binding site" evidence="1">
    <location>
        <position position="76"/>
    </location>
    <ligand>
        <name>Na(+)</name>
        <dbReference type="ChEBI" id="CHEBI:29101"/>
        <note>structural</note>
    </ligand>
</feature>
<feature type="binding site" evidence="1">
    <location>
        <position position="79"/>
    </location>
    <ligand>
        <name>Na(+)</name>
        <dbReference type="ChEBI" id="CHEBI:29101"/>
        <note>structural</note>
    </ligand>
</feature>
<comment type="function">
    <text evidence="1">Fluoride-specific ion channel. Important for reducing fluoride concentration in the cell, thus reducing its toxicity.</text>
</comment>
<comment type="catalytic activity">
    <reaction evidence="1">
        <text>fluoride(in) = fluoride(out)</text>
        <dbReference type="Rhea" id="RHEA:76159"/>
        <dbReference type="ChEBI" id="CHEBI:17051"/>
    </reaction>
    <physiologicalReaction direction="left-to-right" evidence="1">
        <dbReference type="Rhea" id="RHEA:76160"/>
    </physiologicalReaction>
</comment>
<comment type="activity regulation">
    <text evidence="1">Na(+) is not transported, but it plays an essential structural role and its presence is essential for fluoride channel function.</text>
</comment>
<comment type="subcellular location">
    <subcellularLocation>
        <location evidence="1">Cell inner membrane</location>
        <topology evidence="1">Multi-pass membrane protein</topology>
    </subcellularLocation>
</comment>
<comment type="similarity">
    <text evidence="1">Belongs to the fluoride channel Fluc/FEX (TC 1.A.43) family.</text>
</comment>